<dbReference type="EMBL" id="AM933172">
    <property type="protein sequence ID" value="CAR33995.1"/>
    <property type="molecule type" value="Genomic_DNA"/>
</dbReference>
<dbReference type="RefSeq" id="WP_000255008.1">
    <property type="nucleotide sequence ID" value="NC_011294.1"/>
</dbReference>
<dbReference type="SMR" id="B5R3V6"/>
<dbReference type="KEGG" id="set:SEN2410"/>
<dbReference type="HOGENOM" id="CLU_070331_1_0_6"/>
<dbReference type="Proteomes" id="UP000000613">
    <property type="component" value="Chromosome"/>
</dbReference>
<dbReference type="GO" id="GO:0005886">
    <property type="term" value="C:plasma membrane"/>
    <property type="evidence" value="ECO:0007669"/>
    <property type="project" value="UniProtKB-SubCell"/>
</dbReference>
<dbReference type="GO" id="GO:0009675">
    <property type="term" value="F:high-affinity sulfate:proton symporter activity"/>
    <property type="evidence" value="ECO:0007669"/>
    <property type="project" value="TreeGrafter"/>
</dbReference>
<dbReference type="GO" id="GO:0019344">
    <property type="term" value="P:cysteine biosynthetic process"/>
    <property type="evidence" value="ECO:0007669"/>
    <property type="project" value="UniProtKB-UniRule"/>
</dbReference>
<dbReference type="GO" id="GO:0000103">
    <property type="term" value="P:sulfate assimilation"/>
    <property type="evidence" value="ECO:0007669"/>
    <property type="project" value="InterPro"/>
</dbReference>
<dbReference type="HAMAP" id="MF_00468">
    <property type="entry name" value="CysZ"/>
    <property type="match status" value="1"/>
</dbReference>
<dbReference type="InterPro" id="IPR050480">
    <property type="entry name" value="CysZ_sulfate_transptr"/>
</dbReference>
<dbReference type="InterPro" id="IPR022985">
    <property type="entry name" value="Sulfate_CysZ"/>
</dbReference>
<dbReference type="NCBIfam" id="NF003433">
    <property type="entry name" value="PRK04949.1"/>
    <property type="match status" value="1"/>
</dbReference>
<dbReference type="PANTHER" id="PTHR37468">
    <property type="entry name" value="SULFATE TRANSPORTER CYSZ"/>
    <property type="match status" value="1"/>
</dbReference>
<dbReference type="PANTHER" id="PTHR37468:SF1">
    <property type="entry name" value="SULFATE TRANSPORTER CYSZ"/>
    <property type="match status" value="1"/>
</dbReference>
<dbReference type="Pfam" id="PF07264">
    <property type="entry name" value="EI24"/>
    <property type="match status" value="1"/>
</dbReference>
<proteinExistence type="inferred from homology"/>
<feature type="chain" id="PRO_1000125502" description="Sulfate transporter CysZ">
    <location>
        <begin position="1"/>
        <end position="253"/>
    </location>
</feature>
<feature type="transmembrane region" description="Helical" evidence="1">
    <location>
        <begin position="31"/>
        <end position="51"/>
    </location>
</feature>
<feature type="transmembrane region" description="Helical" evidence="1">
    <location>
        <begin position="72"/>
        <end position="92"/>
    </location>
</feature>
<feature type="transmembrane region" description="Helical" evidence="1">
    <location>
        <begin position="151"/>
        <end position="171"/>
    </location>
</feature>
<feature type="transmembrane region" description="Helical" evidence="1">
    <location>
        <begin position="222"/>
        <end position="242"/>
    </location>
</feature>
<evidence type="ECO:0000255" key="1">
    <source>
        <dbReference type="HAMAP-Rule" id="MF_00468"/>
    </source>
</evidence>
<accession>B5R3V6</accession>
<keyword id="KW-0028">Amino-acid biosynthesis</keyword>
<keyword id="KW-0997">Cell inner membrane</keyword>
<keyword id="KW-1003">Cell membrane</keyword>
<keyword id="KW-0198">Cysteine biosynthesis</keyword>
<keyword id="KW-0472">Membrane</keyword>
<keyword id="KW-0764">Sulfate transport</keyword>
<keyword id="KW-0812">Transmembrane</keyword>
<keyword id="KW-1133">Transmembrane helix</keyword>
<keyword id="KW-0813">Transport</keyword>
<sequence length="253" mass="28893">MVSSSTTVPRSGVYYFSQGWKLVTLPGIRRFVILPLLVNIVLMGGAFWWLFTQLDAWIPSLMSHVPDWLQWLSYLLWPIAVISVLLVFGYFFSTLANWIAAPFNGLLAEQLEARLTGATPPDTGILGIMKDVPRIMKREWQKLAWYLPRAIVLLVLYFIPGIGQTIAPVLWFLFSAWMLAIQYCDYPFDNHKVPFKTMRAALRTQKVANMQFGALTSLFTMIPVLNLFIMPVAVCGATAMWVDCWRAKHALWK</sequence>
<gene>
    <name evidence="1" type="primary">cysZ</name>
    <name type="ordered locus">SEN2410</name>
</gene>
<comment type="function">
    <text evidence="1">High affinity, high specificity proton-dependent sulfate transporter, which mediates sulfate uptake. Provides the sulfur source for the cysteine synthesis pathway.</text>
</comment>
<comment type="subcellular location">
    <subcellularLocation>
        <location evidence="1">Cell inner membrane</location>
        <topology evidence="1">Multi-pass membrane protein</topology>
    </subcellularLocation>
</comment>
<comment type="similarity">
    <text evidence="1">Belongs to the CysZ family.</text>
</comment>
<name>CYSZ_SALEP</name>
<protein>
    <recommendedName>
        <fullName evidence="1">Sulfate transporter CysZ</fullName>
    </recommendedName>
</protein>
<reference key="1">
    <citation type="journal article" date="2008" name="Genome Res.">
        <title>Comparative genome analysis of Salmonella enteritidis PT4 and Salmonella gallinarum 287/91 provides insights into evolutionary and host adaptation pathways.</title>
        <authorList>
            <person name="Thomson N.R."/>
            <person name="Clayton D.J."/>
            <person name="Windhorst D."/>
            <person name="Vernikos G."/>
            <person name="Davidson S."/>
            <person name="Churcher C."/>
            <person name="Quail M.A."/>
            <person name="Stevens M."/>
            <person name="Jones M.A."/>
            <person name="Watson M."/>
            <person name="Barron A."/>
            <person name="Layton A."/>
            <person name="Pickard D."/>
            <person name="Kingsley R.A."/>
            <person name="Bignell A."/>
            <person name="Clark L."/>
            <person name="Harris B."/>
            <person name="Ormond D."/>
            <person name="Abdellah Z."/>
            <person name="Brooks K."/>
            <person name="Cherevach I."/>
            <person name="Chillingworth T."/>
            <person name="Woodward J."/>
            <person name="Norberczak H."/>
            <person name="Lord A."/>
            <person name="Arrowsmith C."/>
            <person name="Jagels K."/>
            <person name="Moule S."/>
            <person name="Mungall K."/>
            <person name="Saunders M."/>
            <person name="Whitehead S."/>
            <person name="Chabalgoity J.A."/>
            <person name="Maskell D."/>
            <person name="Humphreys T."/>
            <person name="Roberts M."/>
            <person name="Barrow P.A."/>
            <person name="Dougan G."/>
            <person name="Parkhill J."/>
        </authorList>
    </citation>
    <scope>NUCLEOTIDE SEQUENCE [LARGE SCALE GENOMIC DNA]</scope>
    <source>
        <strain>P125109</strain>
    </source>
</reference>
<organism>
    <name type="scientific">Salmonella enteritidis PT4 (strain P125109)</name>
    <dbReference type="NCBI Taxonomy" id="550537"/>
    <lineage>
        <taxon>Bacteria</taxon>
        <taxon>Pseudomonadati</taxon>
        <taxon>Pseudomonadota</taxon>
        <taxon>Gammaproteobacteria</taxon>
        <taxon>Enterobacterales</taxon>
        <taxon>Enterobacteriaceae</taxon>
        <taxon>Salmonella</taxon>
    </lineage>
</organism>